<reference key="1">
    <citation type="journal article" date="2005" name="J. Bacteriol.">
        <title>Insights into genome plasticity and pathogenicity of the plant pathogenic Bacterium Xanthomonas campestris pv. vesicatoria revealed by the complete genome sequence.</title>
        <authorList>
            <person name="Thieme F."/>
            <person name="Koebnik R."/>
            <person name="Bekel T."/>
            <person name="Berger C."/>
            <person name="Boch J."/>
            <person name="Buettner D."/>
            <person name="Caldana C."/>
            <person name="Gaigalat L."/>
            <person name="Goesmann A."/>
            <person name="Kay S."/>
            <person name="Kirchner O."/>
            <person name="Lanz C."/>
            <person name="Linke B."/>
            <person name="McHardy A.C."/>
            <person name="Meyer F."/>
            <person name="Mittenhuber G."/>
            <person name="Nies D.H."/>
            <person name="Niesbach-Kloesgen U."/>
            <person name="Patschkowski T."/>
            <person name="Rueckert C."/>
            <person name="Rupp O."/>
            <person name="Schneiker S."/>
            <person name="Schuster S.C."/>
            <person name="Vorhoelter F.J."/>
            <person name="Weber E."/>
            <person name="Puehler A."/>
            <person name="Bonas U."/>
            <person name="Bartels D."/>
            <person name="Kaiser O."/>
        </authorList>
    </citation>
    <scope>NUCLEOTIDE SEQUENCE [LARGE SCALE GENOMIC DNA]</scope>
    <source>
        <strain>85-10</strain>
    </source>
</reference>
<comment type="function">
    <text evidence="1">Catalyzes the GTP-dependent ribosomal translocation step during translation elongation. During this step, the ribosome changes from the pre-translocational (PRE) to the post-translocational (POST) state as the newly formed A-site-bound peptidyl-tRNA and P-site-bound deacylated tRNA move to the P and E sites, respectively. Catalyzes the coordinated movement of the two tRNA molecules, the mRNA and conformational changes in the ribosome.</text>
</comment>
<comment type="subcellular location">
    <subcellularLocation>
        <location evidence="1">Cytoplasm</location>
    </subcellularLocation>
</comment>
<comment type="similarity">
    <text evidence="1">Belongs to the TRAFAC class translation factor GTPase superfamily. Classic translation factor GTPase family. EF-G/EF-2 subfamily.</text>
</comment>
<dbReference type="EMBL" id="AM039952">
    <property type="protein sequence ID" value="CAJ22626.1"/>
    <property type="molecule type" value="Genomic_DNA"/>
</dbReference>
<dbReference type="RefSeq" id="WP_008574200.1">
    <property type="nucleotide sequence ID" value="NZ_CP017190.1"/>
</dbReference>
<dbReference type="SMR" id="Q3BWY7"/>
<dbReference type="STRING" id="456327.BJD11_17760"/>
<dbReference type="GeneID" id="97509332"/>
<dbReference type="KEGG" id="xcv:XCV0995"/>
<dbReference type="eggNOG" id="COG0480">
    <property type="taxonomic scope" value="Bacteria"/>
</dbReference>
<dbReference type="HOGENOM" id="CLU_002794_4_1_6"/>
<dbReference type="Proteomes" id="UP000007069">
    <property type="component" value="Chromosome"/>
</dbReference>
<dbReference type="GO" id="GO:0005737">
    <property type="term" value="C:cytoplasm"/>
    <property type="evidence" value="ECO:0007669"/>
    <property type="project" value="UniProtKB-SubCell"/>
</dbReference>
<dbReference type="GO" id="GO:0005525">
    <property type="term" value="F:GTP binding"/>
    <property type="evidence" value="ECO:0007669"/>
    <property type="project" value="UniProtKB-UniRule"/>
</dbReference>
<dbReference type="GO" id="GO:0003924">
    <property type="term" value="F:GTPase activity"/>
    <property type="evidence" value="ECO:0007669"/>
    <property type="project" value="InterPro"/>
</dbReference>
<dbReference type="GO" id="GO:0097216">
    <property type="term" value="F:guanosine tetraphosphate binding"/>
    <property type="evidence" value="ECO:0007669"/>
    <property type="project" value="UniProtKB-ARBA"/>
</dbReference>
<dbReference type="GO" id="GO:0003746">
    <property type="term" value="F:translation elongation factor activity"/>
    <property type="evidence" value="ECO:0007669"/>
    <property type="project" value="UniProtKB-UniRule"/>
</dbReference>
<dbReference type="GO" id="GO:0032790">
    <property type="term" value="P:ribosome disassembly"/>
    <property type="evidence" value="ECO:0007669"/>
    <property type="project" value="TreeGrafter"/>
</dbReference>
<dbReference type="CDD" id="cd01886">
    <property type="entry name" value="EF-G"/>
    <property type="match status" value="1"/>
</dbReference>
<dbReference type="CDD" id="cd16262">
    <property type="entry name" value="EFG_III"/>
    <property type="match status" value="1"/>
</dbReference>
<dbReference type="CDD" id="cd01434">
    <property type="entry name" value="EFG_mtEFG1_IV"/>
    <property type="match status" value="1"/>
</dbReference>
<dbReference type="CDD" id="cd03713">
    <property type="entry name" value="EFG_mtEFG_C"/>
    <property type="match status" value="1"/>
</dbReference>
<dbReference type="CDD" id="cd04088">
    <property type="entry name" value="EFG_mtEFG_II"/>
    <property type="match status" value="1"/>
</dbReference>
<dbReference type="FunFam" id="2.40.30.10:FF:000006">
    <property type="entry name" value="Elongation factor G"/>
    <property type="match status" value="1"/>
</dbReference>
<dbReference type="FunFam" id="3.30.230.10:FF:000003">
    <property type="entry name" value="Elongation factor G"/>
    <property type="match status" value="1"/>
</dbReference>
<dbReference type="FunFam" id="3.30.70.240:FF:000001">
    <property type="entry name" value="Elongation factor G"/>
    <property type="match status" value="1"/>
</dbReference>
<dbReference type="FunFam" id="3.30.70.870:FF:000001">
    <property type="entry name" value="Elongation factor G"/>
    <property type="match status" value="1"/>
</dbReference>
<dbReference type="FunFam" id="3.40.50.300:FF:000029">
    <property type="entry name" value="Elongation factor G"/>
    <property type="match status" value="1"/>
</dbReference>
<dbReference type="Gene3D" id="3.30.230.10">
    <property type="match status" value="1"/>
</dbReference>
<dbReference type="Gene3D" id="3.30.70.240">
    <property type="match status" value="1"/>
</dbReference>
<dbReference type="Gene3D" id="3.30.70.870">
    <property type="entry name" value="Elongation Factor G (Translational Gtpase), domain 3"/>
    <property type="match status" value="1"/>
</dbReference>
<dbReference type="Gene3D" id="3.40.50.300">
    <property type="entry name" value="P-loop containing nucleotide triphosphate hydrolases"/>
    <property type="match status" value="1"/>
</dbReference>
<dbReference type="Gene3D" id="2.40.30.10">
    <property type="entry name" value="Translation factors"/>
    <property type="match status" value="1"/>
</dbReference>
<dbReference type="HAMAP" id="MF_00054_B">
    <property type="entry name" value="EF_G_EF_2_B"/>
    <property type="match status" value="1"/>
</dbReference>
<dbReference type="InterPro" id="IPR041095">
    <property type="entry name" value="EFG_II"/>
</dbReference>
<dbReference type="InterPro" id="IPR009022">
    <property type="entry name" value="EFG_III"/>
</dbReference>
<dbReference type="InterPro" id="IPR035647">
    <property type="entry name" value="EFG_III/V"/>
</dbReference>
<dbReference type="InterPro" id="IPR047872">
    <property type="entry name" value="EFG_IV"/>
</dbReference>
<dbReference type="InterPro" id="IPR035649">
    <property type="entry name" value="EFG_V"/>
</dbReference>
<dbReference type="InterPro" id="IPR000640">
    <property type="entry name" value="EFG_V-like"/>
</dbReference>
<dbReference type="InterPro" id="IPR004161">
    <property type="entry name" value="EFTu-like_2"/>
</dbReference>
<dbReference type="InterPro" id="IPR031157">
    <property type="entry name" value="G_TR_CS"/>
</dbReference>
<dbReference type="InterPro" id="IPR027417">
    <property type="entry name" value="P-loop_NTPase"/>
</dbReference>
<dbReference type="InterPro" id="IPR020568">
    <property type="entry name" value="Ribosomal_Su5_D2-typ_SF"/>
</dbReference>
<dbReference type="InterPro" id="IPR014721">
    <property type="entry name" value="Ribsml_uS5_D2-typ_fold_subgr"/>
</dbReference>
<dbReference type="InterPro" id="IPR005225">
    <property type="entry name" value="Small_GTP-bd"/>
</dbReference>
<dbReference type="InterPro" id="IPR000795">
    <property type="entry name" value="T_Tr_GTP-bd_dom"/>
</dbReference>
<dbReference type="InterPro" id="IPR009000">
    <property type="entry name" value="Transl_B-barrel_sf"/>
</dbReference>
<dbReference type="InterPro" id="IPR004540">
    <property type="entry name" value="Transl_elong_EFG/EF2"/>
</dbReference>
<dbReference type="InterPro" id="IPR005517">
    <property type="entry name" value="Transl_elong_EFG/EF2_IV"/>
</dbReference>
<dbReference type="NCBIfam" id="TIGR00484">
    <property type="entry name" value="EF-G"/>
    <property type="match status" value="1"/>
</dbReference>
<dbReference type="NCBIfam" id="NF009381">
    <property type="entry name" value="PRK12740.1-5"/>
    <property type="match status" value="1"/>
</dbReference>
<dbReference type="NCBIfam" id="TIGR00231">
    <property type="entry name" value="small_GTP"/>
    <property type="match status" value="1"/>
</dbReference>
<dbReference type="PANTHER" id="PTHR43261:SF1">
    <property type="entry name" value="RIBOSOME-RELEASING FACTOR 2, MITOCHONDRIAL"/>
    <property type="match status" value="1"/>
</dbReference>
<dbReference type="PANTHER" id="PTHR43261">
    <property type="entry name" value="TRANSLATION ELONGATION FACTOR G-RELATED"/>
    <property type="match status" value="1"/>
</dbReference>
<dbReference type="Pfam" id="PF00679">
    <property type="entry name" value="EFG_C"/>
    <property type="match status" value="1"/>
</dbReference>
<dbReference type="Pfam" id="PF14492">
    <property type="entry name" value="EFG_III"/>
    <property type="match status" value="1"/>
</dbReference>
<dbReference type="Pfam" id="PF03764">
    <property type="entry name" value="EFG_IV"/>
    <property type="match status" value="1"/>
</dbReference>
<dbReference type="Pfam" id="PF00009">
    <property type="entry name" value="GTP_EFTU"/>
    <property type="match status" value="1"/>
</dbReference>
<dbReference type="Pfam" id="PF03144">
    <property type="entry name" value="GTP_EFTU_D2"/>
    <property type="match status" value="1"/>
</dbReference>
<dbReference type="PRINTS" id="PR00315">
    <property type="entry name" value="ELONGATNFCT"/>
</dbReference>
<dbReference type="SMART" id="SM00838">
    <property type="entry name" value="EFG_C"/>
    <property type="match status" value="1"/>
</dbReference>
<dbReference type="SMART" id="SM00889">
    <property type="entry name" value="EFG_IV"/>
    <property type="match status" value="1"/>
</dbReference>
<dbReference type="SUPFAM" id="SSF54980">
    <property type="entry name" value="EF-G C-terminal domain-like"/>
    <property type="match status" value="2"/>
</dbReference>
<dbReference type="SUPFAM" id="SSF52540">
    <property type="entry name" value="P-loop containing nucleoside triphosphate hydrolases"/>
    <property type="match status" value="1"/>
</dbReference>
<dbReference type="SUPFAM" id="SSF54211">
    <property type="entry name" value="Ribosomal protein S5 domain 2-like"/>
    <property type="match status" value="1"/>
</dbReference>
<dbReference type="SUPFAM" id="SSF50447">
    <property type="entry name" value="Translation proteins"/>
    <property type="match status" value="1"/>
</dbReference>
<dbReference type="PROSITE" id="PS00301">
    <property type="entry name" value="G_TR_1"/>
    <property type="match status" value="1"/>
</dbReference>
<dbReference type="PROSITE" id="PS51722">
    <property type="entry name" value="G_TR_2"/>
    <property type="match status" value="1"/>
</dbReference>
<feature type="chain" id="PRO_0000225251" description="Elongation factor G">
    <location>
        <begin position="1"/>
        <end position="705"/>
    </location>
</feature>
<feature type="domain" description="tr-type G">
    <location>
        <begin position="8"/>
        <end position="290"/>
    </location>
</feature>
<feature type="region of interest" description="Disordered" evidence="2">
    <location>
        <begin position="290"/>
        <end position="309"/>
    </location>
</feature>
<feature type="binding site" evidence="1">
    <location>
        <begin position="17"/>
        <end position="24"/>
    </location>
    <ligand>
        <name>GTP</name>
        <dbReference type="ChEBI" id="CHEBI:37565"/>
    </ligand>
</feature>
<feature type="binding site" evidence="1">
    <location>
        <begin position="88"/>
        <end position="92"/>
    </location>
    <ligand>
        <name>GTP</name>
        <dbReference type="ChEBI" id="CHEBI:37565"/>
    </ligand>
</feature>
<feature type="binding site" evidence="1">
    <location>
        <begin position="142"/>
        <end position="145"/>
    </location>
    <ligand>
        <name>GTP</name>
        <dbReference type="ChEBI" id="CHEBI:37565"/>
    </ligand>
</feature>
<name>EFG_XANE5</name>
<accession>Q3BWY7</accession>
<sequence>MARTTPIERYRNFGIMAHIDAGKTTTSERILFYTGVSHKIGEVHDGAAVMDWMEQEQERGITITSAATTAFWSGMDKSMPQHRFNIIDTPGHVDFTIEVERSLRVLDGAVFVLCAVGGVQPQSETVWRQANKYSVPRMAFVNKMDRTGANFDKVVEQLKARLGAYAVPMQVPIGAEDGFEGVVDLLKMKAIHWDTASQGTTFEYRDIPADLVDVATEARSFMVEAAAEASEDLMDKYLNEGDLSEQEILSGLRERTLKVEIVPVFCGSAFKNKGVQAMLDGVVHLLPSPADRPPVQGIDEDEKEDTRAATDTAPFSALAFKIMTDPFVGSLTFFRVYSGTLNSGDQVYNPVKSKKERVGRILQMHSNNREEIKEVRAGDIAAAVGLKDVTTGDTLCAQDKIITLERMVFPEPVISMAVEPKTKSDQEKMGMALGRLAQEDPSFRVKTDEESGQTIISGMGELHLDIIVDRMRREFNVEANVGKPQVAYRETIRKSDVKSDYKHAKQSGGKGQYGHVVIELSPMTEEERKSENVKDDFLFINDITGGIIPKEFIPSVEKGLRETITSGPIAGFPVVGVKVKLVFGSYHDVDSSEMAFKLAASMAFKQGFAKASPVLLEPIMKVEIVSPEDYLGDVMGDVSRRRGVLQGQDDSPSGKIINAMIPLGEMFGYATSLRSMSQGRATFSMEFDHYEEAPANIADAVTKKG</sequence>
<organism>
    <name type="scientific">Xanthomonas euvesicatoria pv. vesicatoria (strain 85-10)</name>
    <name type="common">Xanthomonas campestris pv. vesicatoria</name>
    <dbReference type="NCBI Taxonomy" id="316273"/>
    <lineage>
        <taxon>Bacteria</taxon>
        <taxon>Pseudomonadati</taxon>
        <taxon>Pseudomonadota</taxon>
        <taxon>Gammaproteobacteria</taxon>
        <taxon>Lysobacterales</taxon>
        <taxon>Lysobacteraceae</taxon>
        <taxon>Xanthomonas</taxon>
    </lineage>
</organism>
<keyword id="KW-0963">Cytoplasm</keyword>
<keyword id="KW-0251">Elongation factor</keyword>
<keyword id="KW-0342">GTP-binding</keyword>
<keyword id="KW-0547">Nucleotide-binding</keyword>
<keyword id="KW-0648">Protein biosynthesis</keyword>
<protein>
    <recommendedName>
        <fullName evidence="1">Elongation factor G</fullName>
        <shortName evidence="1">EF-G</shortName>
    </recommendedName>
</protein>
<evidence type="ECO:0000255" key="1">
    <source>
        <dbReference type="HAMAP-Rule" id="MF_00054"/>
    </source>
</evidence>
<evidence type="ECO:0000256" key="2">
    <source>
        <dbReference type="SAM" id="MobiDB-lite"/>
    </source>
</evidence>
<proteinExistence type="inferred from homology"/>
<gene>
    <name evidence="1" type="primary">fusA</name>
    <name type="ordered locus">XCV0995</name>
</gene>